<feature type="chain" id="PRO_0000200958" description="Uncharacterized protein y4wI">
    <location>
        <begin position="1"/>
        <end position="513"/>
    </location>
</feature>
<feature type="region of interest" description="Disordered" evidence="1">
    <location>
        <begin position="1"/>
        <end position="21"/>
    </location>
</feature>
<feature type="compositionally biased region" description="Basic and acidic residues" evidence="1">
    <location>
        <begin position="1"/>
        <end position="16"/>
    </location>
</feature>
<sequence>MPREHDSKYHRERDMRSGLQETASRAHLYKGEYWRQIFNRRTPEQRRTLSHIKRFMERLAGDIKFRTAVSESVDAPRAVTERYGIEVDPLEILPLWRDDHLTYRYKPESAPWPLSIMWDEYMRDMLRHRDLLRDHGDMSMTNPRFHAWRERQIRRCNDELGGSAPSITHPIIAFELSEGCTVGCWFCGLSAAPFKGYYEYSKQHAELWRGVVGVASEVFGPAARTGFCYWATEPMDNPQYDRFLFDYYQITGALPQTTTAAPLKDEALTRRVLGLFNLYGTTMNRFSVLSTAHLNQIHRAFSPEELTGVELIMQGKDAPTAKAFTGRARKRKEKLSARQEAIAFPERNHTTIACVSGFLVNMPQRRLQLVTPVPGSGRWPLGYRIVGQRSFRTPDEFRDGLKSMIDQHMLESPAPDLPIRFRRDLEYTAGDRCFHLRSRSMEHRVLDYAPISVGHLIACGNFTASELVMRASTDGISVLAVADLLDQLYAAGVIEEDLDDRYAWQTSDGITDR</sequence>
<organism>
    <name type="scientific">Sinorhizobium fredii (strain NBRC 101917 / NGR234)</name>
    <dbReference type="NCBI Taxonomy" id="394"/>
    <lineage>
        <taxon>Bacteria</taxon>
        <taxon>Pseudomonadati</taxon>
        <taxon>Pseudomonadota</taxon>
        <taxon>Alphaproteobacteria</taxon>
        <taxon>Hyphomicrobiales</taxon>
        <taxon>Rhizobiaceae</taxon>
        <taxon>Sinorhizobium/Ensifer group</taxon>
        <taxon>Sinorhizobium</taxon>
    </lineage>
</organism>
<dbReference type="EMBL" id="U00090">
    <property type="protein sequence ID" value="AAB91916.1"/>
    <property type="molecule type" value="Genomic_DNA"/>
</dbReference>
<dbReference type="RefSeq" id="NP_444129.1">
    <property type="nucleotide sequence ID" value="NC_000914.2"/>
</dbReference>
<dbReference type="SMR" id="P55687"/>
<dbReference type="KEGG" id="rhi:NGR_a00960"/>
<dbReference type="PATRIC" id="fig|394.7.peg.85"/>
<dbReference type="eggNOG" id="ENOG502Z81C">
    <property type="taxonomic scope" value="Bacteria"/>
</dbReference>
<dbReference type="HOGENOM" id="CLU_044204_0_0_5"/>
<dbReference type="OrthoDB" id="8251299at2"/>
<dbReference type="Proteomes" id="UP000001054">
    <property type="component" value="Plasmid pNGR234a"/>
</dbReference>
<dbReference type="InterPro" id="IPR030950">
    <property type="entry name" value="rSAM_PoyD"/>
</dbReference>
<dbReference type="NCBIfam" id="TIGR04517">
    <property type="entry name" value="rSAM_PoyD"/>
    <property type="match status" value="1"/>
</dbReference>
<geneLocation type="plasmid">
    <name>sym pNGR234a</name>
</geneLocation>
<evidence type="ECO:0000256" key="1">
    <source>
        <dbReference type="SAM" id="MobiDB-lite"/>
    </source>
</evidence>
<gene>
    <name type="ordered locus">NGR_a00960</name>
    <name type="ORF">y4wI</name>
</gene>
<accession>P55687</accession>
<name>Y4WI_SINFN</name>
<keyword id="KW-0614">Plasmid</keyword>
<keyword id="KW-1185">Reference proteome</keyword>
<proteinExistence type="predicted"/>
<reference key="1">
    <citation type="journal article" date="1997" name="Nature">
        <title>Molecular basis of symbiosis between Rhizobium and legumes.</title>
        <authorList>
            <person name="Freiberg C.A."/>
            <person name="Fellay R."/>
            <person name="Bairoch A."/>
            <person name="Broughton W.J."/>
            <person name="Rosenthal A."/>
            <person name="Perret X."/>
        </authorList>
    </citation>
    <scope>NUCLEOTIDE SEQUENCE [LARGE SCALE GENOMIC DNA]</scope>
    <source>
        <strain>NBRC 101917 / NGR234</strain>
    </source>
</reference>
<reference key="2">
    <citation type="journal article" date="2009" name="Appl. Environ. Microbiol.">
        <title>Rhizobium sp. strain NGR234 possesses a remarkable number of secretion systems.</title>
        <authorList>
            <person name="Schmeisser C."/>
            <person name="Liesegang H."/>
            <person name="Krysciak D."/>
            <person name="Bakkou N."/>
            <person name="Le Quere A."/>
            <person name="Wollherr A."/>
            <person name="Heinemeyer I."/>
            <person name="Morgenstern B."/>
            <person name="Pommerening-Roeser A."/>
            <person name="Flores M."/>
            <person name="Palacios R."/>
            <person name="Brenner S."/>
            <person name="Gottschalk G."/>
            <person name="Schmitz R.A."/>
            <person name="Broughton W.J."/>
            <person name="Perret X."/>
            <person name="Strittmatter A.W."/>
            <person name="Streit W.R."/>
        </authorList>
    </citation>
    <scope>NUCLEOTIDE SEQUENCE [LARGE SCALE GENOMIC DNA]</scope>
    <source>
        <strain>NBRC 101917 / NGR234</strain>
    </source>
</reference>
<protein>
    <recommendedName>
        <fullName>Uncharacterized protein y4wI</fullName>
    </recommendedName>
</protein>